<comment type="function">
    <text evidence="1">Catalyzes the methylthiolation of an aspartic acid residue of ribosomal protein uS12.</text>
</comment>
<comment type="catalytic activity">
    <reaction evidence="1">
        <text>L-aspartate(89)-[ribosomal protein uS12]-hydrogen + (sulfur carrier)-SH + AH2 + 2 S-adenosyl-L-methionine = 3-methylsulfanyl-L-aspartate(89)-[ribosomal protein uS12]-hydrogen + (sulfur carrier)-H + 5'-deoxyadenosine + L-methionine + A + S-adenosyl-L-homocysteine + 2 H(+)</text>
        <dbReference type="Rhea" id="RHEA:37087"/>
        <dbReference type="Rhea" id="RHEA-COMP:10460"/>
        <dbReference type="Rhea" id="RHEA-COMP:10461"/>
        <dbReference type="Rhea" id="RHEA-COMP:14737"/>
        <dbReference type="Rhea" id="RHEA-COMP:14739"/>
        <dbReference type="ChEBI" id="CHEBI:13193"/>
        <dbReference type="ChEBI" id="CHEBI:15378"/>
        <dbReference type="ChEBI" id="CHEBI:17319"/>
        <dbReference type="ChEBI" id="CHEBI:17499"/>
        <dbReference type="ChEBI" id="CHEBI:29917"/>
        <dbReference type="ChEBI" id="CHEBI:29961"/>
        <dbReference type="ChEBI" id="CHEBI:57844"/>
        <dbReference type="ChEBI" id="CHEBI:57856"/>
        <dbReference type="ChEBI" id="CHEBI:59789"/>
        <dbReference type="ChEBI" id="CHEBI:64428"/>
        <dbReference type="ChEBI" id="CHEBI:73599"/>
        <dbReference type="EC" id="2.8.4.4"/>
    </reaction>
</comment>
<comment type="cofactor">
    <cofactor evidence="1">
        <name>[4Fe-4S] cluster</name>
        <dbReference type="ChEBI" id="CHEBI:49883"/>
    </cofactor>
    <text evidence="1">Binds 2 [4Fe-4S] clusters. One cluster is coordinated with 3 cysteines and an exchangeable S-adenosyl-L-methionine.</text>
</comment>
<comment type="subcellular location">
    <subcellularLocation>
        <location evidence="1">Cytoplasm</location>
    </subcellularLocation>
</comment>
<comment type="similarity">
    <text evidence="1">Belongs to the methylthiotransferase family. RimO subfamily.</text>
</comment>
<feature type="chain" id="PRO_0000374672" description="Ribosomal protein uS12 methylthiotransferase RimO">
    <location>
        <begin position="1"/>
        <end position="446"/>
    </location>
</feature>
<feature type="domain" description="MTTase N-terminal" evidence="1">
    <location>
        <begin position="9"/>
        <end position="121"/>
    </location>
</feature>
<feature type="domain" description="Radical SAM core" evidence="2">
    <location>
        <begin position="138"/>
        <end position="375"/>
    </location>
</feature>
<feature type="domain" description="TRAM" evidence="1">
    <location>
        <begin position="378"/>
        <end position="445"/>
    </location>
</feature>
<feature type="binding site" evidence="1">
    <location>
        <position position="18"/>
    </location>
    <ligand>
        <name>[4Fe-4S] cluster</name>
        <dbReference type="ChEBI" id="CHEBI:49883"/>
        <label>1</label>
    </ligand>
</feature>
<feature type="binding site" evidence="1">
    <location>
        <position position="54"/>
    </location>
    <ligand>
        <name>[4Fe-4S] cluster</name>
        <dbReference type="ChEBI" id="CHEBI:49883"/>
        <label>1</label>
    </ligand>
</feature>
<feature type="binding site" evidence="1">
    <location>
        <position position="83"/>
    </location>
    <ligand>
        <name>[4Fe-4S] cluster</name>
        <dbReference type="ChEBI" id="CHEBI:49883"/>
        <label>1</label>
    </ligand>
</feature>
<feature type="binding site" evidence="1">
    <location>
        <position position="152"/>
    </location>
    <ligand>
        <name>[4Fe-4S] cluster</name>
        <dbReference type="ChEBI" id="CHEBI:49883"/>
        <label>2</label>
        <note>4Fe-4S-S-AdoMet</note>
    </ligand>
</feature>
<feature type="binding site" evidence="1">
    <location>
        <position position="156"/>
    </location>
    <ligand>
        <name>[4Fe-4S] cluster</name>
        <dbReference type="ChEBI" id="CHEBI:49883"/>
        <label>2</label>
        <note>4Fe-4S-S-AdoMet</note>
    </ligand>
</feature>
<feature type="binding site" evidence="1">
    <location>
        <position position="159"/>
    </location>
    <ligand>
        <name>[4Fe-4S] cluster</name>
        <dbReference type="ChEBI" id="CHEBI:49883"/>
        <label>2</label>
        <note>4Fe-4S-S-AdoMet</note>
    </ligand>
</feature>
<name>RIMO_ACIF2</name>
<keyword id="KW-0004">4Fe-4S</keyword>
<keyword id="KW-0963">Cytoplasm</keyword>
<keyword id="KW-0408">Iron</keyword>
<keyword id="KW-0411">Iron-sulfur</keyword>
<keyword id="KW-0479">Metal-binding</keyword>
<keyword id="KW-1185">Reference proteome</keyword>
<keyword id="KW-0949">S-adenosyl-L-methionine</keyword>
<keyword id="KW-0808">Transferase</keyword>
<protein>
    <recommendedName>
        <fullName evidence="1">Ribosomal protein uS12 methylthiotransferase RimO</fullName>
        <shortName evidence="1">uS12 MTTase</shortName>
        <shortName evidence="1">uS12 methylthiotransferase</shortName>
        <ecNumber evidence="1">2.8.4.4</ecNumber>
    </recommendedName>
    <alternativeName>
        <fullName evidence="1">Ribosomal protein uS12 (aspartate-C(3))-methylthiotransferase</fullName>
    </alternativeName>
    <alternativeName>
        <fullName evidence="1">Ribosome maturation factor RimO</fullName>
    </alternativeName>
</protein>
<proteinExistence type="inferred from homology"/>
<sequence>MKAGANTPPKVGFVSLGCPKATVDSERILTQLRAEGYLLVGDYANADVVVVNTCGFIDAAVEESLEAIGEALDENGKVVVTGCLGAREGGDFVRGAHPKVLAVTGPNQAGAVLDAIHAALPPAHDPYTDLVPPQGLRLTPPHYAYLKISEGCNQSCSFCIIPSMRGKLVSRAPDDILREAEALVAGGAKELLVISQDTGAYGVDRKYRTAFHNGRPLKTRITDLCAALGELGVWVRLHYVYPYPHIDELLPLMAEGKILPYLDVPLQHGSPRILKAMRRPAAAEKTLDRILGWRQAVPDLIIRSTFIVGFPGETDADFAELLDFLRAAELDRVGCFAYSAVEGAPANAIAGAVPEPVKEERRAAFMAVQEAISRQRLQRRVGQRQRVLVDAMARGGRVIARSASDAPEIDGVVHLGKAAGLQVGDWVEVAITRADAHDLYGMVVSA</sequence>
<dbReference type="EC" id="2.8.4.4" evidence="1"/>
<dbReference type="EMBL" id="CP001219">
    <property type="protein sequence ID" value="ACK79426.1"/>
    <property type="molecule type" value="Genomic_DNA"/>
</dbReference>
<dbReference type="RefSeq" id="WP_009560743.1">
    <property type="nucleotide sequence ID" value="NC_011761.1"/>
</dbReference>
<dbReference type="SMR" id="B7J3M4"/>
<dbReference type="STRING" id="243159.AFE_0127"/>
<dbReference type="PaxDb" id="243159-AFE_0127"/>
<dbReference type="GeneID" id="65279517"/>
<dbReference type="KEGG" id="afr:AFE_0127"/>
<dbReference type="eggNOG" id="COG0621">
    <property type="taxonomic scope" value="Bacteria"/>
</dbReference>
<dbReference type="HOGENOM" id="CLU_018697_0_0_6"/>
<dbReference type="Proteomes" id="UP000001362">
    <property type="component" value="Chromosome"/>
</dbReference>
<dbReference type="GO" id="GO:0005829">
    <property type="term" value="C:cytosol"/>
    <property type="evidence" value="ECO:0007669"/>
    <property type="project" value="TreeGrafter"/>
</dbReference>
<dbReference type="GO" id="GO:0051539">
    <property type="term" value="F:4 iron, 4 sulfur cluster binding"/>
    <property type="evidence" value="ECO:0007669"/>
    <property type="project" value="UniProtKB-UniRule"/>
</dbReference>
<dbReference type="GO" id="GO:0035599">
    <property type="term" value="F:aspartic acid methylthiotransferase activity"/>
    <property type="evidence" value="ECO:0007669"/>
    <property type="project" value="TreeGrafter"/>
</dbReference>
<dbReference type="GO" id="GO:0046872">
    <property type="term" value="F:metal ion binding"/>
    <property type="evidence" value="ECO:0007669"/>
    <property type="project" value="UniProtKB-KW"/>
</dbReference>
<dbReference type="GO" id="GO:0103039">
    <property type="term" value="F:protein methylthiotransferase activity"/>
    <property type="evidence" value="ECO:0007669"/>
    <property type="project" value="UniProtKB-EC"/>
</dbReference>
<dbReference type="GO" id="GO:0006400">
    <property type="term" value="P:tRNA modification"/>
    <property type="evidence" value="ECO:0007669"/>
    <property type="project" value="InterPro"/>
</dbReference>
<dbReference type="CDD" id="cd01335">
    <property type="entry name" value="Radical_SAM"/>
    <property type="match status" value="1"/>
</dbReference>
<dbReference type="FunFam" id="3.40.50.12160:FF:000002">
    <property type="entry name" value="Ribosomal protein S12 methylthiotransferase RimO"/>
    <property type="match status" value="1"/>
</dbReference>
<dbReference type="FunFam" id="3.80.30.20:FF:000001">
    <property type="entry name" value="tRNA-2-methylthio-N(6)-dimethylallyladenosine synthase 2"/>
    <property type="match status" value="1"/>
</dbReference>
<dbReference type="Gene3D" id="3.40.50.12160">
    <property type="entry name" value="Methylthiotransferase, N-terminal domain"/>
    <property type="match status" value="1"/>
</dbReference>
<dbReference type="Gene3D" id="2.40.50.140">
    <property type="entry name" value="Nucleic acid-binding proteins"/>
    <property type="match status" value="1"/>
</dbReference>
<dbReference type="Gene3D" id="3.80.30.20">
    <property type="entry name" value="tm_1862 like domain"/>
    <property type="match status" value="1"/>
</dbReference>
<dbReference type="HAMAP" id="MF_01865">
    <property type="entry name" value="MTTase_RimO"/>
    <property type="match status" value="1"/>
</dbReference>
<dbReference type="InterPro" id="IPR006638">
    <property type="entry name" value="Elp3/MiaA/NifB-like_rSAM"/>
</dbReference>
<dbReference type="InterPro" id="IPR005839">
    <property type="entry name" value="Methylthiotransferase"/>
</dbReference>
<dbReference type="InterPro" id="IPR020612">
    <property type="entry name" value="Methylthiotransferase_CS"/>
</dbReference>
<dbReference type="InterPro" id="IPR013848">
    <property type="entry name" value="Methylthiotransferase_N"/>
</dbReference>
<dbReference type="InterPro" id="IPR038135">
    <property type="entry name" value="Methylthiotransferase_N_sf"/>
</dbReference>
<dbReference type="InterPro" id="IPR012340">
    <property type="entry name" value="NA-bd_OB-fold"/>
</dbReference>
<dbReference type="InterPro" id="IPR005840">
    <property type="entry name" value="Ribosomal_uS12_MeSTrfase_RimO"/>
</dbReference>
<dbReference type="InterPro" id="IPR007197">
    <property type="entry name" value="rSAM"/>
</dbReference>
<dbReference type="InterPro" id="IPR023404">
    <property type="entry name" value="rSAM_horseshoe"/>
</dbReference>
<dbReference type="InterPro" id="IPR002792">
    <property type="entry name" value="TRAM_dom"/>
</dbReference>
<dbReference type="NCBIfam" id="TIGR01125">
    <property type="entry name" value="30S ribosomal protein S12 methylthiotransferase RimO"/>
    <property type="match status" value="1"/>
</dbReference>
<dbReference type="NCBIfam" id="TIGR00089">
    <property type="entry name" value="MiaB/RimO family radical SAM methylthiotransferase"/>
    <property type="match status" value="1"/>
</dbReference>
<dbReference type="PANTHER" id="PTHR43837">
    <property type="entry name" value="RIBOSOMAL PROTEIN S12 METHYLTHIOTRANSFERASE RIMO"/>
    <property type="match status" value="1"/>
</dbReference>
<dbReference type="PANTHER" id="PTHR43837:SF1">
    <property type="entry name" value="RIBOSOMAL PROTEIN US12 METHYLTHIOTRANSFERASE RIMO"/>
    <property type="match status" value="1"/>
</dbReference>
<dbReference type="Pfam" id="PF04055">
    <property type="entry name" value="Radical_SAM"/>
    <property type="match status" value="1"/>
</dbReference>
<dbReference type="Pfam" id="PF18693">
    <property type="entry name" value="TRAM_2"/>
    <property type="match status" value="1"/>
</dbReference>
<dbReference type="Pfam" id="PF00919">
    <property type="entry name" value="UPF0004"/>
    <property type="match status" value="1"/>
</dbReference>
<dbReference type="SFLD" id="SFLDG01082">
    <property type="entry name" value="B12-binding_domain_containing"/>
    <property type="match status" value="1"/>
</dbReference>
<dbReference type="SFLD" id="SFLDS00029">
    <property type="entry name" value="Radical_SAM"/>
    <property type="match status" value="1"/>
</dbReference>
<dbReference type="SFLD" id="SFLDF00274">
    <property type="entry name" value="ribosomal_protein_S12_methylth"/>
    <property type="match status" value="1"/>
</dbReference>
<dbReference type="SMART" id="SM00729">
    <property type="entry name" value="Elp3"/>
    <property type="match status" value="1"/>
</dbReference>
<dbReference type="SUPFAM" id="SSF102114">
    <property type="entry name" value="Radical SAM enzymes"/>
    <property type="match status" value="1"/>
</dbReference>
<dbReference type="PROSITE" id="PS51449">
    <property type="entry name" value="MTTASE_N"/>
    <property type="match status" value="1"/>
</dbReference>
<dbReference type="PROSITE" id="PS01278">
    <property type="entry name" value="MTTASE_RADICAL"/>
    <property type="match status" value="1"/>
</dbReference>
<dbReference type="PROSITE" id="PS51918">
    <property type="entry name" value="RADICAL_SAM"/>
    <property type="match status" value="1"/>
</dbReference>
<dbReference type="PROSITE" id="PS50926">
    <property type="entry name" value="TRAM"/>
    <property type="match status" value="1"/>
</dbReference>
<evidence type="ECO:0000255" key="1">
    <source>
        <dbReference type="HAMAP-Rule" id="MF_01865"/>
    </source>
</evidence>
<evidence type="ECO:0000255" key="2">
    <source>
        <dbReference type="PROSITE-ProRule" id="PRU01266"/>
    </source>
</evidence>
<organism>
    <name type="scientific">Acidithiobacillus ferrooxidans (strain ATCC 23270 / DSM 14882 / CIP 104768 / NCIMB 8455)</name>
    <name type="common">Ferrobacillus ferrooxidans (strain ATCC 23270)</name>
    <dbReference type="NCBI Taxonomy" id="243159"/>
    <lineage>
        <taxon>Bacteria</taxon>
        <taxon>Pseudomonadati</taxon>
        <taxon>Pseudomonadota</taxon>
        <taxon>Acidithiobacillia</taxon>
        <taxon>Acidithiobacillales</taxon>
        <taxon>Acidithiobacillaceae</taxon>
        <taxon>Acidithiobacillus</taxon>
    </lineage>
</organism>
<accession>B7J3M4</accession>
<gene>
    <name evidence="1" type="primary">rimO</name>
    <name type="ordered locus">AFE_0127</name>
</gene>
<reference key="1">
    <citation type="journal article" date="2008" name="BMC Genomics">
        <title>Acidithiobacillus ferrooxidans metabolism: from genome sequence to industrial applications.</title>
        <authorList>
            <person name="Valdes J."/>
            <person name="Pedroso I."/>
            <person name="Quatrini R."/>
            <person name="Dodson R.J."/>
            <person name="Tettelin H."/>
            <person name="Blake R. II"/>
            <person name="Eisen J.A."/>
            <person name="Holmes D.S."/>
        </authorList>
    </citation>
    <scope>NUCLEOTIDE SEQUENCE [LARGE SCALE GENOMIC DNA]</scope>
    <source>
        <strain>ATCC 23270 / DSM 14882 / CIP 104768 / NCIMB 8455</strain>
    </source>
</reference>